<organism>
    <name type="scientific">Danio rerio</name>
    <name type="common">Zebrafish</name>
    <name type="synonym">Brachydanio rerio</name>
    <dbReference type="NCBI Taxonomy" id="7955"/>
    <lineage>
        <taxon>Eukaryota</taxon>
        <taxon>Metazoa</taxon>
        <taxon>Chordata</taxon>
        <taxon>Craniata</taxon>
        <taxon>Vertebrata</taxon>
        <taxon>Euteleostomi</taxon>
        <taxon>Actinopterygii</taxon>
        <taxon>Neopterygii</taxon>
        <taxon>Teleostei</taxon>
        <taxon>Ostariophysi</taxon>
        <taxon>Cypriniformes</taxon>
        <taxon>Danionidae</taxon>
        <taxon>Danioninae</taxon>
        <taxon>Danio</taxon>
    </lineage>
</organism>
<protein>
    <recommendedName>
        <fullName>Lactosylceramide 1,3-N-acetyl-beta-D-glucosaminyltransferase A</fullName>
        <ecNumber evidence="2">2.4.1.206</ecNumber>
    </recommendedName>
    <alternativeName>
        <fullName>Lactotriaosylceramide synthase A</fullName>
        <shortName>Lc(3)Cer synthase A</shortName>
        <shortName>Lc3 synthase A</shortName>
    </alternativeName>
    <alternativeName>
        <fullName>UDP-GlcNAc:beta-Gal beta-1,3-N-acetylglucosaminyltransferase 5A</fullName>
        <shortName>BGnT-5A</shortName>
        <shortName>Beta-1,3-Gn-T5A</shortName>
        <shortName>Beta-1,3-N-acetylglucosaminyltransferase 5A</shortName>
        <shortName>Beta3Gn-T5A</shortName>
    </alternativeName>
</protein>
<reference key="1">
    <citation type="journal article" date="2003" name="Dev. Dyn.">
        <title>Expression of zebrafish Lc3 synthase gene in embryonic lens requires hedgehog signaling.</title>
        <authorList>
            <person name="Cao Y."/>
            <person name="Zhao J."/>
            <person name="Wang Y."/>
            <person name="Meng A."/>
        </authorList>
    </citation>
    <scope>NUCLEOTIDE SEQUENCE [MRNA]</scope>
    <scope>DEVELOPMENTAL STAGE</scope>
    <scope>INDUCTION</scope>
</reference>
<reference key="2">
    <citation type="submission" date="2004-07" db="EMBL/GenBank/DDBJ databases">
        <authorList>
            <consortium name="NIH - Zebrafish Gene Collection (ZGC) project"/>
        </authorList>
    </citation>
    <scope>NUCLEOTIDE SEQUENCE [LARGE SCALE MRNA]</scope>
</reference>
<name>B3G5A_DANRE</name>
<dbReference type="EC" id="2.4.1.206" evidence="2"/>
<dbReference type="EMBL" id="AY292460">
    <property type="protein sequence ID" value="AAP42946.1"/>
    <property type="molecule type" value="mRNA"/>
</dbReference>
<dbReference type="EMBL" id="BC075943">
    <property type="protein sequence ID" value="AAH75943.1"/>
    <property type="molecule type" value="mRNA"/>
</dbReference>
<dbReference type="RefSeq" id="NP_942577.1">
    <property type="nucleotide sequence ID" value="NM_198876.1"/>
</dbReference>
<dbReference type="SMR" id="Q7T3S5"/>
<dbReference type="FunCoup" id="Q7T3S5">
    <property type="interactions" value="31"/>
</dbReference>
<dbReference type="STRING" id="7955.ENSDARP00000117098"/>
<dbReference type="CAZy" id="GT31">
    <property type="family name" value="Glycosyltransferase Family 31"/>
</dbReference>
<dbReference type="GlyCosmos" id="Q7T3S5">
    <property type="glycosylation" value="4 sites, No reported glycans"/>
</dbReference>
<dbReference type="PaxDb" id="7955-ENSDARP00000117098"/>
<dbReference type="Ensembl" id="ENSDART00000132365">
    <property type="protein sequence ID" value="ENSDARP00000117098"/>
    <property type="gene ID" value="ENSDARG00000018971"/>
</dbReference>
<dbReference type="Ensembl" id="ENSDART00000191497">
    <property type="protein sequence ID" value="ENSDARP00000146890"/>
    <property type="gene ID" value="ENSDARG00000018971"/>
</dbReference>
<dbReference type="GeneID" id="336526"/>
<dbReference type="KEGG" id="dre:336526"/>
<dbReference type="AGR" id="ZFIN:ZDB-GENE-030131-8470"/>
<dbReference type="CTD" id="336526"/>
<dbReference type="ZFIN" id="ZDB-GENE-030131-8470">
    <property type="gene designation" value="b3gnt5a"/>
</dbReference>
<dbReference type="eggNOG" id="KOG2287">
    <property type="taxonomic scope" value="Eukaryota"/>
</dbReference>
<dbReference type="HOGENOM" id="CLU_036849_2_4_1"/>
<dbReference type="InParanoid" id="Q7T3S5"/>
<dbReference type="OMA" id="NTYSCKA"/>
<dbReference type="OrthoDB" id="115198at2759"/>
<dbReference type="PhylomeDB" id="Q7T3S5"/>
<dbReference type="TreeFam" id="TF318639"/>
<dbReference type="BRENDA" id="2.4.1.206">
    <property type="organism ID" value="928"/>
</dbReference>
<dbReference type="Reactome" id="R-DRE-913709">
    <property type="pathway name" value="O-linked glycosylation of mucins"/>
</dbReference>
<dbReference type="Reactome" id="R-DRE-9840309">
    <property type="pathway name" value="Glycosphingolipid biosynthesis"/>
</dbReference>
<dbReference type="UniPathway" id="UPA00378"/>
<dbReference type="PRO" id="PR:Q7T3S5"/>
<dbReference type="Proteomes" id="UP000000437">
    <property type="component" value="Chromosome 11"/>
</dbReference>
<dbReference type="Bgee" id="ENSDARG00000018971">
    <property type="expression patterns" value="Expressed in granulocyte and 21 other cell types or tissues"/>
</dbReference>
<dbReference type="GO" id="GO:0000139">
    <property type="term" value="C:Golgi membrane"/>
    <property type="evidence" value="ECO:0000318"/>
    <property type="project" value="GO_Central"/>
</dbReference>
<dbReference type="GO" id="GO:0016757">
    <property type="term" value="F:glycosyltransferase activity"/>
    <property type="evidence" value="ECO:0000318"/>
    <property type="project" value="GO_Central"/>
</dbReference>
<dbReference type="GO" id="GO:0047256">
    <property type="term" value="F:lactosylceramide 1,3-N-acetyl-beta-D-glucosaminyltransferase activity"/>
    <property type="evidence" value="ECO:0007669"/>
    <property type="project" value="UniProtKB-EC"/>
</dbReference>
<dbReference type="GO" id="GO:0006629">
    <property type="term" value="P:lipid metabolic process"/>
    <property type="evidence" value="ECO:0007669"/>
    <property type="project" value="UniProtKB-KW"/>
</dbReference>
<dbReference type="GO" id="GO:0006493">
    <property type="term" value="P:protein O-linked glycosylation"/>
    <property type="evidence" value="ECO:0000318"/>
    <property type="project" value="GO_Central"/>
</dbReference>
<dbReference type="FunFam" id="3.90.550.50:FF:000019">
    <property type="entry name" value="Hexosyltransferase"/>
    <property type="match status" value="1"/>
</dbReference>
<dbReference type="Gene3D" id="3.90.550.50">
    <property type="match status" value="1"/>
</dbReference>
<dbReference type="InterPro" id="IPR002659">
    <property type="entry name" value="Glyco_trans_31"/>
</dbReference>
<dbReference type="PANTHER" id="PTHR11214">
    <property type="entry name" value="BETA-1,3-N-ACETYLGLUCOSAMINYLTRANSFERASE"/>
    <property type="match status" value="1"/>
</dbReference>
<dbReference type="PANTHER" id="PTHR11214:SF21">
    <property type="entry name" value="LACTOSYLCERAMIDE 1,3-N-ACETYL-BETA-D-GLUCOSAMINYLTRANSFERASE"/>
    <property type="match status" value="1"/>
</dbReference>
<dbReference type="Pfam" id="PF01762">
    <property type="entry name" value="Galactosyl_T"/>
    <property type="match status" value="1"/>
</dbReference>
<comment type="function">
    <text evidence="3">Beta-1,3-N-acetylglucosaminyltransferase that plays a key role in the synthesis of lacto- or neolacto-series carbohydrate chains on glycolipids.</text>
</comment>
<comment type="catalytic activity">
    <reaction evidence="3">
        <text>a beta-D-Gal-(1-&gt;4)-beta-D-Glc-(1&lt;-&gt;1)-Cer(d18:1(4E)) + UDP-N-acetyl-alpha-D-glucosamine = a beta-D-GlcNAc-(1-&gt;3)-beta-D-Gal-(1-&gt;4)-beta-D-Glc-(1&lt;-&gt;1)-Cer(d18:1(4E)) + UDP + H(+)</text>
        <dbReference type="Rhea" id="RHEA:13905"/>
        <dbReference type="ChEBI" id="CHEBI:15378"/>
        <dbReference type="ChEBI" id="CHEBI:17103"/>
        <dbReference type="ChEBI" id="CHEBI:17950"/>
        <dbReference type="ChEBI" id="CHEBI:57705"/>
        <dbReference type="ChEBI" id="CHEBI:58223"/>
        <dbReference type="EC" id="2.4.1.206"/>
    </reaction>
    <physiologicalReaction direction="left-to-right" evidence="3">
        <dbReference type="Rhea" id="RHEA:13906"/>
    </physiologicalReaction>
</comment>
<comment type="catalytic activity">
    <reaction evidence="3">
        <text>a neolactoside nLc4Cer(d18:1(4E)) + UDP-N-acetyl-alpha-D-glucosamine = a neolactoside IV(3)-beta-GlcNAc-nLc4Cer(d18:1(4E)) + UDP + H(+)</text>
        <dbReference type="Rhea" id="RHEA:23004"/>
        <dbReference type="ChEBI" id="CHEBI:15378"/>
        <dbReference type="ChEBI" id="CHEBI:17006"/>
        <dbReference type="ChEBI" id="CHEBI:57705"/>
        <dbReference type="ChEBI" id="CHEBI:58223"/>
        <dbReference type="ChEBI" id="CHEBI:142448"/>
    </reaction>
    <physiologicalReaction direction="left-to-right" evidence="3">
        <dbReference type="Rhea" id="RHEA:23005"/>
    </physiologicalReaction>
</comment>
<comment type="pathway">
    <text>Protein modification; protein glycosylation.</text>
</comment>
<comment type="subcellular location">
    <subcellularLocation>
        <location evidence="1">Golgi apparatus membrane</location>
        <topology evidence="1">Single-pass type II membrane protein</topology>
    </subcellularLocation>
</comment>
<comment type="developmental stage">
    <text evidence="5">Expressed in 2 distinct phases during the embryogenesis. The early phase extends from late blastulation to the completion of epiboly, during which the expression occurs in the superficial layer of the embryos. The second phase of expression starts during mid-segmentation and persists until day 3, during which the expression occurs prominently in the developing lens.</text>
</comment>
<comment type="induction">
    <text evidence="5">Hedgehog signaling is required for expression in embryonic lens.</text>
</comment>
<comment type="similarity">
    <text evidence="6">Belongs to the glycosyltransferase 31 family.</text>
</comment>
<sequence>MFMNCRRVKKWHFLQLLSMCCVMSVLMVCWEHVDHHVVSHVKSYSYRYLINSYDFINKSLSVSPEEAARFGSFPYLLDRRDVCKNKDVLLLLFVKSSPGNFKRRQAIRSTWGNESYISQELGVVVKVVFAMGVRPDRSGHKTMQRELRKEHMAHHDLIQQDFLDTFHNLTVKLLLQFRWTHENCAHAHFLMSADDDVFIHVPNLVHYLQELKSQNVRNLWVGHVHRGAPPVRKRDSKYYMPFDMYQWSSYPDYTAGAGYVVSGDVAAKIYQATQSLNASMYIDDVFMGICAIAAGVSPQEHVYFSGEGKTPYHPCIYEKMITSHGHEGDIRYLWKAATGPQVEGISSGLLGKLYCAAVKMTLLCKPYFTNTYSCMAAFT</sequence>
<proteinExistence type="evidence at transcript level"/>
<accession>Q7T3S5</accession>
<keyword id="KW-0325">Glycoprotein</keyword>
<keyword id="KW-0328">Glycosyltransferase</keyword>
<keyword id="KW-0333">Golgi apparatus</keyword>
<keyword id="KW-0443">Lipid metabolism</keyword>
<keyword id="KW-0472">Membrane</keyword>
<keyword id="KW-1185">Reference proteome</keyword>
<keyword id="KW-0735">Signal-anchor</keyword>
<keyword id="KW-0808">Transferase</keyword>
<keyword id="KW-0812">Transmembrane</keyword>
<keyword id="KW-1133">Transmembrane helix</keyword>
<feature type="chain" id="PRO_0000289213" description="Lactosylceramide 1,3-N-acetyl-beta-D-glucosaminyltransferase A">
    <location>
        <begin position="1"/>
        <end position="379"/>
    </location>
</feature>
<feature type="topological domain" description="Cytoplasmic" evidence="4">
    <location>
        <begin position="1"/>
        <end position="12"/>
    </location>
</feature>
<feature type="transmembrane region" description="Helical; Signal-anchor for type II membrane protein" evidence="4">
    <location>
        <begin position="13"/>
        <end position="30"/>
    </location>
</feature>
<feature type="topological domain" description="Lumenal" evidence="4">
    <location>
        <begin position="31"/>
        <end position="379"/>
    </location>
</feature>
<feature type="glycosylation site" description="N-linked (GlcNAc...) asparagine" evidence="4">
    <location>
        <position position="57"/>
    </location>
</feature>
<feature type="glycosylation site" description="N-linked (GlcNAc...) asparagine" evidence="4">
    <location>
        <position position="113"/>
    </location>
</feature>
<feature type="glycosylation site" description="N-linked (GlcNAc...) asparagine" evidence="4">
    <location>
        <position position="168"/>
    </location>
</feature>
<feature type="glycosylation site" description="N-linked (GlcNAc...) asparagine" evidence="4">
    <location>
        <position position="277"/>
    </location>
</feature>
<gene>
    <name type="primary">b3gnt5a</name>
    <name type="synonym">b3gnt5</name>
</gene>
<evidence type="ECO:0000250" key="1"/>
<evidence type="ECO:0000250" key="2">
    <source>
        <dbReference type="UniProtKB" id="Q8BGY6"/>
    </source>
</evidence>
<evidence type="ECO:0000250" key="3">
    <source>
        <dbReference type="UniProtKB" id="Q9BYG0"/>
    </source>
</evidence>
<evidence type="ECO:0000255" key="4"/>
<evidence type="ECO:0000269" key="5">
    <source>
    </source>
</evidence>
<evidence type="ECO:0000305" key="6"/>